<keyword id="KW-0007">Acetylation</keyword>
<keyword id="KW-0025">Alternative splicing</keyword>
<keyword id="KW-1267">Proteomics identification</keyword>
<keyword id="KW-1185">Reference proteome</keyword>
<keyword id="KW-0677">Repeat</keyword>
<keyword id="KW-0833">Ubl conjugation pathway</keyword>
<keyword id="KW-0853">WD repeat</keyword>
<organism>
    <name type="scientific">Homo sapiens</name>
    <name type="common">Human</name>
    <dbReference type="NCBI Taxonomy" id="9606"/>
    <lineage>
        <taxon>Eukaryota</taxon>
        <taxon>Metazoa</taxon>
        <taxon>Chordata</taxon>
        <taxon>Craniata</taxon>
        <taxon>Vertebrata</taxon>
        <taxon>Euteleostomi</taxon>
        <taxon>Mammalia</taxon>
        <taxon>Eutheria</taxon>
        <taxon>Euarchontoglires</taxon>
        <taxon>Primates</taxon>
        <taxon>Haplorrhini</taxon>
        <taxon>Catarrhini</taxon>
        <taxon>Hominidae</taxon>
        <taxon>Homo</taxon>
    </lineage>
</organism>
<sequence>MERKDFETWLDNISVTFLSLTDLQKNETLDHLISLSGAVQLRHLSNNLETLLKRDFLKLLPLELSFYLLKWLDPQTLLTCCLVSKQWNKVISACTEVWQTACKNLGWQIDDSVQDALHWKKVYLKAILRMKQLEDHEAFETSSLIGHSARVYALYYKDGLLCTGSDDLSAKLWDVSTGQCVYGIQTHTCAAVKFDEQKLVTGSFDNTVACWEWSSGARTQHFRGHTGAVFSVDYNDELDILVSGSADFTVKVWALSAGTCLNTLTGHTEWVTKVVLQKCKVKSLLHSPGDYILLSADKYEIKIWPIGREINCKCLKTLSVSEDRSICLQPRLHFDGKYIVCSSALGLYQWDFASYDILRVIKTPEIANLALLGFGDIFALLFDNRYLYIMDLRTESLISRWPLPEYRKSKRGSSFLAGEASWLNGLDGHNDTGLVFATSMPDHSIHLVLWKEHG</sequence>
<proteinExistence type="evidence at protein level"/>
<feature type="chain" id="PRO_0000050988" description="F-box/WD repeat-containing protein 2">
    <location>
        <begin position="1"/>
        <end position="454"/>
    </location>
</feature>
<feature type="domain" description="F-box" evidence="1">
    <location>
        <begin position="54"/>
        <end position="101"/>
    </location>
</feature>
<feature type="repeat" description="WD 1">
    <location>
        <begin position="139"/>
        <end position="175"/>
    </location>
</feature>
<feature type="repeat" description="WD 2">
    <location>
        <begin position="179"/>
        <end position="213"/>
    </location>
</feature>
<feature type="repeat" description="WD 3">
    <location>
        <begin position="217"/>
        <end position="255"/>
    </location>
</feature>
<feature type="repeat" description="WD 4">
    <location>
        <begin position="259"/>
        <end position="306"/>
    </location>
</feature>
<feature type="repeat" description="WD 5">
    <location>
        <begin position="313"/>
        <end position="352"/>
    </location>
</feature>
<feature type="repeat" description="WD 6">
    <location>
        <begin position="364"/>
        <end position="403"/>
    </location>
</feature>
<feature type="repeat" description="WD 7">
    <location>
        <begin position="410"/>
        <end position="452"/>
    </location>
</feature>
<feature type="modified residue" description="N6-acetyllysine" evidence="5">
    <location>
        <position position="298"/>
    </location>
</feature>
<feature type="splice variant" id="VSP_012983" description="In isoform 2." evidence="3">
    <location>
        <begin position="164"/>
        <end position="228"/>
    </location>
</feature>
<feature type="sequence conflict" description="In Ref. 3; BAB14051." evidence="4" ref="3">
    <original>E</original>
    <variation>G</variation>
    <location>
        <position position="405"/>
    </location>
</feature>
<feature type="sequence conflict" description="In Ref. 1; AAF04465." evidence="4" ref="1">
    <original>K</original>
    <variation>E</variation>
    <location>
        <position position="408"/>
    </location>
</feature>
<reference key="1">
    <citation type="journal article" date="1999" name="Curr. Biol.">
        <title>A family of mammalian F-box proteins.</title>
        <authorList>
            <person name="Winston J.T."/>
            <person name="Koepp D.M."/>
            <person name="Zhu C."/>
            <person name="Elledge S.J."/>
            <person name="Harper J.W."/>
        </authorList>
    </citation>
    <scope>NUCLEOTIDE SEQUENCE [MRNA] (ISOFORM 1)</scope>
</reference>
<reference key="2">
    <citation type="submission" date="1999-10" db="EMBL/GenBank/DDBJ databases">
        <title>Cloning and characterization of human MD6 protein.</title>
        <authorList>
            <person name="Zhou Y."/>
            <person name="Yu L."/>
            <person name="Zhao S.Y."/>
        </authorList>
    </citation>
    <scope>NUCLEOTIDE SEQUENCE [MRNA] (ISOFORMS 1 AND 2)</scope>
</reference>
<reference key="3">
    <citation type="journal article" date="2004" name="Nat. Genet.">
        <title>Complete sequencing and characterization of 21,243 full-length human cDNAs.</title>
        <authorList>
            <person name="Ota T."/>
            <person name="Suzuki Y."/>
            <person name="Nishikawa T."/>
            <person name="Otsuki T."/>
            <person name="Sugiyama T."/>
            <person name="Irie R."/>
            <person name="Wakamatsu A."/>
            <person name="Hayashi K."/>
            <person name="Sato H."/>
            <person name="Nagai K."/>
            <person name="Kimura K."/>
            <person name="Makita H."/>
            <person name="Sekine M."/>
            <person name="Obayashi M."/>
            <person name="Nishi T."/>
            <person name="Shibahara T."/>
            <person name="Tanaka T."/>
            <person name="Ishii S."/>
            <person name="Yamamoto J."/>
            <person name="Saito K."/>
            <person name="Kawai Y."/>
            <person name="Isono Y."/>
            <person name="Nakamura Y."/>
            <person name="Nagahari K."/>
            <person name="Murakami K."/>
            <person name="Yasuda T."/>
            <person name="Iwayanagi T."/>
            <person name="Wagatsuma M."/>
            <person name="Shiratori A."/>
            <person name="Sudo H."/>
            <person name="Hosoiri T."/>
            <person name="Kaku Y."/>
            <person name="Kodaira H."/>
            <person name="Kondo H."/>
            <person name="Sugawara M."/>
            <person name="Takahashi M."/>
            <person name="Kanda K."/>
            <person name="Yokoi T."/>
            <person name="Furuya T."/>
            <person name="Kikkawa E."/>
            <person name="Omura Y."/>
            <person name="Abe K."/>
            <person name="Kamihara K."/>
            <person name="Katsuta N."/>
            <person name="Sato K."/>
            <person name="Tanikawa M."/>
            <person name="Yamazaki M."/>
            <person name="Ninomiya K."/>
            <person name="Ishibashi T."/>
            <person name="Yamashita H."/>
            <person name="Murakawa K."/>
            <person name="Fujimori K."/>
            <person name="Tanai H."/>
            <person name="Kimata M."/>
            <person name="Watanabe M."/>
            <person name="Hiraoka S."/>
            <person name="Chiba Y."/>
            <person name="Ishida S."/>
            <person name="Ono Y."/>
            <person name="Takiguchi S."/>
            <person name="Watanabe S."/>
            <person name="Yosida M."/>
            <person name="Hotuta T."/>
            <person name="Kusano J."/>
            <person name="Kanehori K."/>
            <person name="Takahashi-Fujii A."/>
            <person name="Hara H."/>
            <person name="Tanase T.-O."/>
            <person name="Nomura Y."/>
            <person name="Togiya S."/>
            <person name="Komai F."/>
            <person name="Hara R."/>
            <person name="Takeuchi K."/>
            <person name="Arita M."/>
            <person name="Imose N."/>
            <person name="Musashino K."/>
            <person name="Yuuki H."/>
            <person name="Oshima A."/>
            <person name="Sasaki N."/>
            <person name="Aotsuka S."/>
            <person name="Yoshikawa Y."/>
            <person name="Matsunawa H."/>
            <person name="Ichihara T."/>
            <person name="Shiohata N."/>
            <person name="Sano S."/>
            <person name="Moriya S."/>
            <person name="Momiyama H."/>
            <person name="Satoh N."/>
            <person name="Takami S."/>
            <person name="Terashima Y."/>
            <person name="Suzuki O."/>
            <person name="Nakagawa S."/>
            <person name="Senoh A."/>
            <person name="Mizoguchi H."/>
            <person name="Goto Y."/>
            <person name="Shimizu F."/>
            <person name="Wakebe H."/>
            <person name="Hishigaki H."/>
            <person name="Watanabe T."/>
            <person name="Sugiyama A."/>
            <person name="Takemoto M."/>
            <person name="Kawakami B."/>
            <person name="Yamazaki M."/>
            <person name="Watanabe K."/>
            <person name="Kumagai A."/>
            <person name="Itakura S."/>
            <person name="Fukuzumi Y."/>
            <person name="Fujimori Y."/>
            <person name="Komiyama M."/>
            <person name="Tashiro H."/>
            <person name="Tanigami A."/>
            <person name="Fujiwara T."/>
            <person name="Ono T."/>
            <person name="Yamada K."/>
            <person name="Fujii Y."/>
            <person name="Ozaki K."/>
            <person name="Hirao M."/>
            <person name="Ohmori Y."/>
            <person name="Kawabata A."/>
            <person name="Hikiji T."/>
            <person name="Kobatake N."/>
            <person name="Inagaki H."/>
            <person name="Ikema Y."/>
            <person name="Okamoto S."/>
            <person name="Okitani R."/>
            <person name="Kawakami T."/>
            <person name="Noguchi S."/>
            <person name="Itoh T."/>
            <person name="Shigeta K."/>
            <person name="Senba T."/>
            <person name="Matsumura K."/>
            <person name="Nakajima Y."/>
            <person name="Mizuno T."/>
            <person name="Morinaga M."/>
            <person name="Sasaki M."/>
            <person name="Togashi T."/>
            <person name="Oyama M."/>
            <person name="Hata H."/>
            <person name="Watanabe M."/>
            <person name="Komatsu T."/>
            <person name="Mizushima-Sugano J."/>
            <person name="Satoh T."/>
            <person name="Shirai Y."/>
            <person name="Takahashi Y."/>
            <person name="Nakagawa K."/>
            <person name="Okumura K."/>
            <person name="Nagase T."/>
            <person name="Nomura N."/>
            <person name="Kikuchi H."/>
            <person name="Masuho Y."/>
            <person name="Yamashita R."/>
            <person name="Nakai K."/>
            <person name="Yada T."/>
            <person name="Nakamura Y."/>
            <person name="Ohara O."/>
            <person name="Isogai T."/>
            <person name="Sugano S."/>
        </authorList>
    </citation>
    <scope>NUCLEOTIDE SEQUENCE [LARGE SCALE MRNA] (ISOFORM 1)</scope>
    <source>
        <tissue>Lung</tissue>
        <tissue>Mammary gland</tissue>
    </source>
</reference>
<reference key="4">
    <citation type="journal article" date="2004" name="Nature">
        <title>DNA sequence and analysis of human chromosome 9.</title>
        <authorList>
            <person name="Humphray S.J."/>
            <person name="Oliver K."/>
            <person name="Hunt A.R."/>
            <person name="Plumb R.W."/>
            <person name="Loveland J.E."/>
            <person name="Howe K.L."/>
            <person name="Andrews T.D."/>
            <person name="Searle S."/>
            <person name="Hunt S.E."/>
            <person name="Scott C.E."/>
            <person name="Jones M.C."/>
            <person name="Ainscough R."/>
            <person name="Almeida J.P."/>
            <person name="Ambrose K.D."/>
            <person name="Ashwell R.I.S."/>
            <person name="Babbage A.K."/>
            <person name="Babbage S."/>
            <person name="Bagguley C.L."/>
            <person name="Bailey J."/>
            <person name="Banerjee R."/>
            <person name="Barker D.J."/>
            <person name="Barlow K.F."/>
            <person name="Bates K."/>
            <person name="Beasley H."/>
            <person name="Beasley O."/>
            <person name="Bird C.P."/>
            <person name="Bray-Allen S."/>
            <person name="Brown A.J."/>
            <person name="Brown J.Y."/>
            <person name="Burford D."/>
            <person name="Burrill W."/>
            <person name="Burton J."/>
            <person name="Carder C."/>
            <person name="Carter N.P."/>
            <person name="Chapman J.C."/>
            <person name="Chen Y."/>
            <person name="Clarke G."/>
            <person name="Clark S.Y."/>
            <person name="Clee C.M."/>
            <person name="Clegg S."/>
            <person name="Collier R.E."/>
            <person name="Corby N."/>
            <person name="Crosier M."/>
            <person name="Cummings A.T."/>
            <person name="Davies J."/>
            <person name="Dhami P."/>
            <person name="Dunn M."/>
            <person name="Dutta I."/>
            <person name="Dyer L.W."/>
            <person name="Earthrowl M.E."/>
            <person name="Faulkner L."/>
            <person name="Fleming C.J."/>
            <person name="Frankish A."/>
            <person name="Frankland J.A."/>
            <person name="French L."/>
            <person name="Fricker D.G."/>
            <person name="Garner P."/>
            <person name="Garnett J."/>
            <person name="Ghori J."/>
            <person name="Gilbert J.G.R."/>
            <person name="Glison C."/>
            <person name="Grafham D.V."/>
            <person name="Gribble S."/>
            <person name="Griffiths C."/>
            <person name="Griffiths-Jones S."/>
            <person name="Grocock R."/>
            <person name="Guy J."/>
            <person name="Hall R.E."/>
            <person name="Hammond S."/>
            <person name="Harley J.L."/>
            <person name="Harrison E.S.I."/>
            <person name="Hart E.A."/>
            <person name="Heath P.D."/>
            <person name="Henderson C.D."/>
            <person name="Hopkins B.L."/>
            <person name="Howard P.J."/>
            <person name="Howden P.J."/>
            <person name="Huckle E."/>
            <person name="Johnson C."/>
            <person name="Johnson D."/>
            <person name="Joy A.A."/>
            <person name="Kay M."/>
            <person name="Keenan S."/>
            <person name="Kershaw J.K."/>
            <person name="Kimberley A.M."/>
            <person name="King A."/>
            <person name="Knights A."/>
            <person name="Laird G.K."/>
            <person name="Langford C."/>
            <person name="Lawlor S."/>
            <person name="Leongamornlert D.A."/>
            <person name="Leversha M."/>
            <person name="Lloyd C."/>
            <person name="Lloyd D.M."/>
            <person name="Lovell J."/>
            <person name="Martin S."/>
            <person name="Mashreghi-Mohammadi M."/>
            <person name="Matthews L."/>
            <person name="McLaren S."/>
            <person name="McLay K.E."/>
            <person name="McMurray A."/>
            <person name="Milne S."/>
            <person name="Nickerson T."/>
            <person name="Nisbett J."/>
            <person name="Nordsiek G."/>
            <person name="Pearce A.V."/>
            <person name="Peck A.I."/>
            <person name="Porter K.M."/>
            <person name="Pandian R."/>
            <person name="Pelan S."/>
            <person name="Phillimore B."/>
            <person name="Povey S."/>
            <person name="Ramsey Y."/>
            <person name="Rand V."/>
            <person name="Scharfe M."/>
            <person name="Sehra H.K."/>
            <person name="Shownkeen R."/>
            <person name="Sims S.K."/>
            <person name="Skuce C.D."/>
            <person name="Smith M."/>
            <person name="Steward C.A."/>
            <person name="Swarbreck D."/>
            <person name="Sycamore N."/>
            <person name="Tester J."/>
            <person name="Thorpe A."/>
            <person name="Tracey A."/>
            <person name="Tromans A."/>
            <person name="Thomas D.W."/>
            <person name="Wall M."/>
            <person name="Wallis J.M."/>
            <person name="West A.P."/>
            <person name="Whitehead S.L."/>
            <person name="Willey D.L."/>
            <person name="Williams S.A."/>
            <person name="Wilming L."/>
            <person name="Wray P.W."/>
            <person name="Young L."/>
            <person name="Ashurst J.L."/>
            <person name="Coulson A."/>
            <person name="Blocker H."/>
            <person name="Durbin R.M."/>
            <person name="Sulston J.E."/>
            <person name="Hubbard T."/>
            <person name="Jackson M.J."/>
            <person name="Bentley D.R."/>
            <person name="Beck S."/>
            <person name="Rogers J."/>
            <person name="Dunham I."/>
        </authorList>
    </citation>
    <scope>NUCLEOTIDE SEQUENCE [LARGE SCALE GENOMIC DNA]</scope>
</reference>
<reference key="5">
    <citation type="journal article" date="2004" name="Genome Res.">
        <title>The status, quality, and expansion of the NIH full-length cDNA project: the Mammalian Gene Collection (MGC).</title>
        <authorList>
            <consortium name="The MGC Project Team"/>
        </authorList>
    </citation>
    <scope>NUCLEOTIDE SEQUENCE [LARGE SCALE MRNA] (ISOFORM 1)</scope>
    <source>
        <tissue>Brain</tissue>
        <tissue>Uterus</tissue>
    </source>
</reference>
<reference key="6">
    <citation type="journal article" date="1999" name="Curr. Biol.">
        <title>Identification of a family of human F-box proteins.</title>
        <authorList>
            <person name="Cenciarelli C."/>
            <person name="Chiaur D.S."/>
            <person name="Guardavaccaro D."/>
            <person name="Parks W."/>
            <person name="Vidal M."/>
            <person name="Pagano M."/>
        </authorList>
    </citation>
    <scope>NUCLEOTIDE SEQUENCE [MRNA] OF 1-422 (ISOFORM 1)</scope>
    <scope>INTERACTION WITH SKP1 AND CUL1</scope>
</reference>
<reference key="7">
    <citation type="journal article" date="2009" name="Science">
        <title>Lysine acetylation targets protein complexes and co-regulates major cellular functions.</title>
        <authorList>
            <person name="Choudhary C."/>
            <person name="Kumar C."/>
            <person name="Gnad F."/>
            <person name="Nielsen M.L."/>
            <person name="Rehman M."/>
            <person name="Walther T.C."/>
            <person name="Olsen J.V."/>
            <person name="Mann M."/>
        </authorList>
    </citation>
    <scope>ACETYLATION [LARGE SCALE ANALYSIS] AT LYS-298</scope>
    <scope>IDENTIFICATION BY MASS SPECTROMETRY [LARGE SCALE ANALYSIS]</scope>
</reference>
<evidence type="ECO:0000255" key="1">
    <source>
        <dbReference type="PROSITE-ProRule" id="PRU00080"/>
    </source>
</evidence>
<evidence type="ECO:0000269" key="2">
    <source>
    </source>
</evidence>
<evidence type="ECO:0000303" key="3">
    <source ref="2"/>
</evidence>
<evidence type="ECO:0000305" key="4"/>
<evidence type="ECO:0007744" key="5">
    <source>
    </source>
</evidence>
<gene>
    <name type="primary">FBXW2</name>
    <name type="synonym">FBW2</name>
    <name type="synonym">FWD2</name>
</gene>
<dbReference type="EMBL" id="AF176698">
    <property type="protein sequence ID" value="AAF13226.1"/>
    <property type="status" value="ALT_FRAME"/>
    <property type="molecule type" value="mRNA"/>
</dbReference>
<dbReference type="EMBL" id="AF145024">
    <property type="protein sequence ID" value="AAP97276.1"/>
    <property type="status" value="ALT_FRAME"/>
    <property type="molecule type" value="mRNA"/>
</dbReference>
<dbReference type="EMBL" id="AF193594">
    <property type="protein sequence ID" value="AAP97280.1"/>
    <property type="status" value="ALT_FRAME"/>
    <property type="molecule type" value="mRNA"/>
</dbReference>
<dbReference type="EMBL" id="AK022484">
    <property type="protein sequence ID" value="BAB14051.1"/>
    <property type="molecule type" value="mRNA"/>
</dbReference>
<dbReference type="EMBL" id="AK091860">
    <property type="protein sequence ID" value="BAG52430.1"/>
    <property type="molecule type" value="mRNA"/>
</dbReference>
<dbReference type="EMBL" id="AL161911">
    <property type="status" value="NOT_ANNOTATED_CDS"/>
    <property type="molecule type" value="Genomic_DNA"/>
</dbReference>
<dbReference type="EMBL" id="BC018738">
    <property type="protein sequence ID" value="AAH18738.1"/>
    <property type="molecule type" value="mRNA"/>
</dbReference>
<dbReference type="EMBL" id="BC110334">
    <property type="protein sequence ID" value="AAI10335.1"/>
    <property type="molecule type" value="mRNA"/>
</dbReference>
<dbReference type="EMBL" id="AF129531">
    <property type="protein sequence ID" value="AAF04465.1"/>
    <property type="status" value="ALT_FRAME"/>
    <property type="molecule type" value="mRNA"/>
</dbReference>
<dbReference type="CCDS" id="CCDS43872.1">
    <molecule id="Q9UKT8-1"/>
</dbReference>
<dbReference type="RefSeq" id="NP_001362817.1">
    <molecule id="Q9UKT8-1"/>
    <property type="nucleotide sequence ID" value="NM_001375888.1"/>
</dbReference>
<dbReference type="RefSeq" id="NP_036296.2">
    <molecule id="Q9UKT8-1"/>
    <property type="nucleotide sequence ID" value="NM_012164.4"/>
</dbReference>
<dbReference type="RefSeq" id="XP_005251967.1">
    <property type="nucleotide sequence ID" value="XM_005251910.3"/>
</dbReference>
<dbReference type="RefSeq" id="XP_016870104.1">
    <molecule id="Q9UKT8-2"/>
    <property type="nucleotide sequence ID" value="XM_017014615.3"/>
</dbReference>
<dbReference type="RefSeq" id="XP_024303277.1">
    <molecule id="Q9UKT8-2"/>
    <property type="nucleotide sequence ID" value="XM_024447509.2"/>
</dbReference>
<dbReference type="RefSeq" id="XP_054218685.1">
    <molecule id="Q9UKT8-2"/>
    <property type="nucleotide sequence ID" value="XM_054362710.1"/>
</dbReference>
<dbReference type="RefSeq" id="XP_054218686.1">
    <molecule id="Q9UKT8-2"/>
    <property type="nucleotide sequence ID" value="XM_054362711.1"/>
</dbReference>
<dbReference type="SMR" id="Q9UKT8"/>
<dbReference type="BioGRID" id="117603">
    <property type="interactions" value="42"/>
</dbReference>
<dbReference type="ComplexPortal" id="CPX-7747">
    <property type="entry name" value="SCF E3 ubiquitin ligase complex, FBXW2 variant"/>
</dbReference>
<dbReference type="CORUM" id="Q9UKT8"/>
<dbReference type="DIP" id="DIP-37972N"/>
<dbReference type="FunCoup" id="Q9UKT8">
    <property type="interactions" value="1662"/>
</dbReference>
<dbReference type="IntAct" id="Q9UKT8">
    <property type="interactions" value="28"/>
</dbReference>
<dbReference type="MINT" id="Q9UKT8"/>
<dbReference type="STRING" id="9606.ENSP00000476369"/>
<dbReference type="GlyGen" id="Q9UKT8">
    <property type="glycosylation" value="1 site, 1 O-linked glycan (1 site)"/>
</dbReference>
<dbReference type="iPTMnet" id="Q9UKT8"/>
<dbReference type="PhosphoSitePlus" id="Q9UKT8"/>
<dbReference type="BioMuta" id="FBXW2"/>
<dbReference type="DMDM" id="60416443"/>
<dbReference type="jPOST" id="Q9UKT8"/>
<dbReference type="MassIVE" id="Q9UKT8"/>
<dbReference type="PaxDb" id="9606-ENSP00000476369"/>
<dbReference type="PeptideAtlas" id="Q9UKT8"/>
<dbReference type="ProteomicsDB" id="84853">
    <molecule id="Q9UKT8-1"/>
</dbReference>
<dbReference type="ProteomicsDB" id="84854">
    <molecule id="Q9UKT8-2"/>
</dbReference>
<dbReference type="Pumba" id="Q9UKT8"/>
<dbReference type="Antibodypedia" id="30094">
    <property type="antibodies" value="148 antibodies from 28 providers"/>
</dbReference>
<dbReference type="DNASU" id="26190"/>
<dbReference type="Ensembl" id="ENST00000608872.6">
    <molecule id="Q9UKT8-1"/>
    <property type="protein sequence ID" value="ENSP00000476369.1"/>
    <property type="gene ID" value="ENSG00000119402.18"/>
</dbReference>
<dbReference type="Ensembl" id="ENST00000684001.1">
    <molecule id="Q9UKT8-1"/>
    <property type="protein sequence ID" value="ENSP00000507010.1"/>
    <property type="gene ID" value="ENSG00000119402.18"/>
</dbReference>
<dbReference type="Ensembl" id="ENST00000684047.1">
    <molecule id="Q9UKT8-1"/>
    <property type="protein sequence ID" value="ENSP00000508157.1"/>
    <property type="gene ID" value="ENSG00000119402.18"/>
</dbReference>
<dbReference type="GeneID" id="26190"/>
<dbReference type="KEGG" id="hsa:26190"/>
<dbReference type="MANE-Select" id="ENST00000608872.6">
    <property type="protein sequence ID" value="ENSP00000476369.1"/>
    <property type="RefSeq nucleotide sequence ID" value="NM_012164.4"/>
    <property type="RefSeq protein sequence ID" value="NP_036296.2"/>
</dbReference>
<dbReference type="UCSC" id="uc004bkm.2">
    <molecule id="Q9UKT8-1"/>
    <property type="organism name" value="human"/>
</dbReference>
<dbReference type="AGR" id="HGNC:13608"/>
<dbReference type="CTD" id="26190"/>
<dbReference type="DisGeNET" id="26190"/>
<dbReference type="GeneCards" id="FBXW2"/>
<dbReference type="HGNC" id="HGNC:13608">
    <property type="gene designation" value="FBXW2"/>
</dbReference>
<dbReference type="HPA" id="ENSG00000119402">
    <property type="expression patterns" value="Low tissue specificity"/>
</dbReference>
<dbReference type="MalaCards" id="FBXW2"/>
<dbReference type="MIM" id="609071">
    <property type="type" value="gene"/>
</dbReference>
<dbReference type="neXtProt" id="NX_Q9UKT8"/>
<dbReference type="OpenTargets" id="ENSG00000119402"/>
<dbReference type="PharmGKB" id="PA28052"/>
<dbReference type="VEuPathDB" id="HostDB:ENSG00000119402"/>
<dbReference type="eggNOG" id="KOG0274">
    <property type="taxonomic scope" value="Eukaryota"/>
</dbReference>
<dbReference type="GeneTree" id="ENSGT00930000151016"/>
<dbReference type="HOGENOM" id="CLU_041488_0_0_1"/>
<dbReference type="InParanoid" id="Q9UKT8"/>
<dbReference type="OMA" id="TIACWDW"/>
<dbReference type="OrthoDB" id="538223at2759"/>
<dbReference type="PAN-GO" id="Q9UKT8">
    <property type="GO annotations" value="0 GO annotations based on evolutionary models"/>
</dbReference>
<dbReference type="PhylomeDB" id="Q9UKT8"/>
<dbReference type="TreeFam" id="TF333134"/>
<dbReference type="PathwayCommons" id="Q9UKT8"/>
<dbReference type="Reactome" id="R-HSA-390471">
    <property type="pathway name" value="Association of TriC/CCT with target proteins during biosynthesis"/>
</dbReference>
<dbReference type="Reactome" id="R-HSA-8951664">
    <property type="pathway name" value="Neddylation"/>
</dbReference>
<dbReference type="Reactome" id="R-HSA-983168">
    <property type="pathway name" value="Antigen processing: Ubiquitination &amp; Proteasome degradation"/>
</dbReference>
<dbReference type="SignaLink" id="Q9UKT8"/>
<dbReference type="SIGNOR" id="Q9UKT8"/>
<dbReference type="BioGRID-ORCS" id="26190">
    <property type="hits" value="11 hits in 1193 CRISPR screens"/>
</dbReference>
<dbReference type="ChiTaRS" id="FBXW2">
    <property type="organism name" value="human"/>
</dbReference>
<dbReference type="GeneWiki" id="FBXW2"/>
<dbReference type="GenomeRNAi" id="26190"/>
<dbReference type="Pharos" id="Q9UKT8">
    <property type="development level" value="Tbio"/>
</dbReference>
<dbReference type="PRO" id="PR:Q9UKT8"/>
<dbReference type="Proteomes" id="UP000005640">
    <property type="component" value="Chromosome 9"/>
</dbReference>
<dbReference type="RNAct" id="Q9UKT8">
    <property type="molecule type" value="protein"/>
</dbReference>
<dbReference type="Bgee" id="ENSG00000119402">
    <property type="expression patterns" value="Expressed in buccal mucosa cell and 210 other cell types or tissues"/>
</dbReference>
<dbReference type="ExpressionAtlas" id="Q9UKT8">
    <property type="expression patterns" value="baseline and differential"/>
</dbReference>
<dbReference type="GO" id="GO:0005829">
    <property type="term" value="C:cytosol"/>
    <property type="evidence" value="ECO:0000304"/>
    <property type="project" value="Reactome"/>
</dbReference>
<dbReference type="GO" id="GO:0004842">
    <property type="term" value="F:ubiquitin-protein transferase activity"/>
    <property type="evidence" value="ECO:0000304"/>
    <property type="project" value="ProtInc"/>
</dbReference>
<dbReference type="GO" id="GO:0036211">
    <property type="term" value="P:protein modification process"/>
    <property type="evidence" value="ECO:0000304"/>
    <property type="project" value="ProtInc"/>
</dbReference>
<dbReference type="GO" id="GO:0006508">
    <property type="term" value="P:proteolysis"/>
    <property type="evidence" value="ECO:0000304"/>
    <property type="project" value="ProtInc"/>
</dbReference>
<dbReference type="CDD" id="cd22131">
    <property type="entry name" value="F-box_FBXW2"/>
    <property type="match status" value="1"/>
</dbReference>
<dbReference type="CDD" id="cd00200">
    <property type="entry name" value="WD40"/>
    <property type="match status" value="1"/>
</dbReference>
<dbReference type="FunFam" id="2.130.10.10:FF:000151">
    <property type="entry name" value="F-box/WD repeat-containing protein 2 isoform X1"/>
    <property type="match status" value="1"/>
</dbReference>
<dbReference type="Gene3D" id="1.20.1280.50">
    <property type="match status" value="1"/>
</dbReference>
<dbReference type="Gene3D" id="2.130.10.10">
    <property type="entry name" value="YVTN repeat-like/Quinoprotein amine dehydrogenase"/>
    <property type="match status" value="1"/>
</dbReference>
<dbReference type="InterPro" id="IPR036047">
    <property type="entry name" value="F-box-like_dom_sf"/>
</dbReference>
<dbReference type="InterPro" id="IPR001810">
    <property type="entry name" value="F-box_dom"/>
</dbReference>
<dbReference type="InterPro" id="IPR042627">
    <property type="entry name" value="FBXW2"/>
</dbReference>
<dbReference type="InterPro" id="IPR020472">
    <property type="entry name" value="G-protein_beta_WD-40_rep"/>
</dbReference>
<dbReference type="InterPro" id="IPR015943">
    <property type="entry name" value="WD40/YVTN_repeat-like_dom_sf"/>
</dbReference>
<dbReference type="InterPro" id="IPR019775">
    <property type="entry name" value="WD40_repeat_CS"/>
</dbReference>
<dbReference type="InterPro" id="IPR036322">
    <property type="entry name" value="WD40_repeat_dom_sf"/>
</dbReference>
<dbReference type="InterPro" id="IPR001680">
    <property type="entry name" value="WD40_rpt"/>
</dbReference>
<dbReference type="PANTHER" id="PTHR44436">
    <property type="entry name" value="F-BOX/WD REPEAT-CONTAINING PROTEIN 2"/>
    <property type="match status" value="1"/>
</dbReference>
<dbReference type="PANTHER" id="PTHR44436:SF1">
    <property type="entry name" value="F-BOX_WD REPEAT-CONTAINING PROTEIN 2"/>
    <property type="match status" value="1"/>
</dbReference>
<dbReference type="Pfam" id="PF12937">
    <property type="entry name" value="F-box-like"/>
    <property type="match status" value="1"/>
</dbReference>
<dbReference type="Pfam" id="PF00400">
    <property type="entry name" value="WD40"/>
    <property type="match status" value="3"/>
</dbReference>
<dbReference type="PRINTS" id="PR00320">
    <property type="entry name" value="GPROTEINBRPT"/>
</dbReference>
<dbReference type="SMART" id="SM00256">
    <property type="entry name" value="FBOX"/>
    <property type="match status" value="1"/>
</dbReference>
<dbReference type="SMART" id="SM00320">
    <property type="entry name" value="WD40"/>
    <property type="match status" value="5"/>
</dbReference>
<dbReference type="SUPFAM" id="SSF81383">
    <property type="entry name" value="F-box domain"/>
    <property type="match status" value="1"/>
</dbReference>
<dbReference type="SUPFAM" id="SSF50978">
    <property type="entry name" value="WD40 repeat-like"/>
    <property type="match status" value="1"/>
</dbReference>
<dbReference type="PROSITE" id="PS50181">
    <property type="entry name" value="FBOX"/>
    <property type="match status" value="1"/>
</dbReference>
<dbReference type="PROSITE" id="PS00678">
    <property type="entry name" value="WD_REPEATS_1"/>
    <property type="match status" value="1"/>
</dbReference>
<dbReference type="PROSITE" id="PS50082">
    <property type="entry name" value="WD_REPEATS_2"/>
    <property type="match status" value="2"/>
</dbReference>
<dbReference type="PROSITE" id="PS50294">
    <property type="entry name" value="WD_REPEATS_REGION"/>
    <property type="match status" value="1"/>
</dbReference>
<comment type="function">
    <text>Substrate-recognition component of the SCF (SKP1-CUL1-F-box protein)-type E3 ubiquitin ligase complex.</text>
</comment>
<comment type="subunit">
    <text evidence="2">Directly interacts with SKP1 and CUL1.</text>
</comment>
<comment type="interaction">
    <interactant intactId="EBI-914727">
        <id>Q9UKT8</id>
    </interactant>
    <interactant intactId="EBI-295634">
        <id>Q16543</id>
        <label>CDC37</label>
    </interactant>
    <organismsDiffer>false</organismsDiffer>
    <experiments>2</experiments>
</comment>
<comment type="interaction">
    <interactant intactId="EBI-914727">
        <id>Q9UKT8</id>
    </interactant>
    <interactant intactId="EBI-12357161">
        <id>Q5SYC1</id>
        <label>CLVS2</label>
    </interactant>
    <organismsDiffer>false</organismsDiffer>
    <experiments>3</experiments>
</comment>
<comment type="interaction">
    <interactant intactId="EBI-914727">
        <id>Q9UKT8</id>
    </interactant>
    <interactant intactId="EBI-359390">
        <id>Q13616</id>
        <label>CUL1</label>
    </interactant>
    <organismsDiffer>false</organismsDiffer>
    <experiments>5</experiments>
</comment>
<comment type="interaction">
    <interactant intactId="EBI-914727">
        <id>Q9UKT8</id>
    </interactant>
    <interactant intactId="EBI-21194843">
        <id>Q9NP62</id>
        <label>GCM1</label>
    </interactant>
    <organismsDiffer>false</organismsDiffer>
    <experiments>4</experiments>
</comment>
<comment type="interaction">
    <interactant intactId="EBI-914727">
        <id>Q9UKT8</id>
    </interactant>
    <interactant intactId="EBI-352572">
        <id>P08238</id>
        <label>HSP90AB1</label>
    </interactant>
    <organismsDiffer>false</organismsDiffer>
    <experiments>2</experiments>
</comment>
<comment type="interaction">
    <interactant intactId="EBI-914727">
        <id>Q9UKT8</id>
    </interactant>
    <interactant intactId="EBI-357298">
        <id>Q9Y266</id>
        <label>NUDC</label>
    </interactant>
    <organismsDiffer>false</organismsDiffer>
    <experiments>2</experiments>
</comment>
<comment type="interaction">
    <interactant intactId="EBI-914727">
        <id>Q9UKT8</id>
    </interactant>
    <interactant intactId="EBI-296739">
        <id>P63244</id>
        <label>RACK1</label>
    </interactant>
    <organismsDiffer>false</organismsDiffer>
    <experiments>11</experiments>
</comment>
<comment type="interaction">
    <interactant intactId="EBI-914727">
        <id>Q9UKT8</id>
    </interactant>
    <interactant intactId="EBI-307486">
        <id>P63208</id>
        <label>SKP1</label>
    </interactant>
    <organismsDiffer>false</organismsDiffer>
    <experiments>7</experiments>
</comment>
<comment type="interaction">
    <interactant intactId="EBI-914727">
        <id>Q9UKT8</id>
    </interactant>
    <interactant intactId="EBI-2130429">
        <id>Q9BYV2</id>
        <label>TRIM54</label>
    </interactant>
    <organismsDiffer>false</organismsDiffer>
    <experiments>2</experiments>
</comment>
<comment type="alternative products">
    <event type="alternative splicing"/>
    <isoform>
        <id>Q9UKT8-1</id>
        <name>1</name>
        <sequence type="displayed"/>
    </isoform>
    <isoform>
        <id>Q9UKT8-2</id>
        <name>2</name>
        <name>MD6b</name>
        <sequence type="described" ref="VSP_012983"/>
    </isoform>
</comment>
<comment type="sequence caution" evidence="4">
    <conflict type="frameshift">
        <sequence resource="EMBL-CDS" id="AAF04465"/>
    </conflict>
</comment>
<comment type="sequence caution" evidence="4">
    <conflict type="frameshift">
        <sequence resource="EMBL-CDS" id="AAF13226"/>
    </conflict>
</comment>
<comment type="sequence caution" evidence="4">
    <conflict type="frameshift">
        <sequence resource="EMBL-CDS" id="AAP97276"/>
    </conflict>
</comment>
<comment type="sequence caution" evidence="4">
    <conflict type="frameshift">
        <sequence resource="EMBL-CDS" id="AAP97280"/>
    </conflict>
</comment>
<name>FBXW2_HUMAN</name>
<protein>
    <recommendedName>
        <fullName>F-box/WD repeat-containing protein 2</fullName>
    </recommendedName>
    <alternativeName>
        <fullName>F-box and WD-40 domain-containing protein 2</fullName>
    </alternativeName>
    <alternativeName>
        <fullName>Protein MD6</fullName>
    </alternativeName>
</protein>
<accession>Q9UKT8</accession>
<accession>B3KRL8</accession>
<accession>Q4VXH2</accession>
<accession>Q7Z4V6</accession>
<accession>Q8WV51</accession>
<accession>Q9HA09</accession>
<accession>Q9UKA3</accession>